<accession>Q1CBF6</accession>
<keyword id="KW-0997">Cell inner membrane</keyword>
<keyword id="KW-1003">Cell membrane</keyword>
<keyword id="KW-0472">Membrane</keyword>
<keyword id="KW-0653">Protein transport</keyword>
<keyword id="KW-0811">Translocation</keyword>
<keyword id="KW-0812">Transmembrane</keyword>
<keyword id="KW-1133">Transmembrane helix</keyword>
<keyword id="KW-0813">Transport</keyword>
<sequence length="220" mass="23279">MFDIGFSELLLVLVIGLVVLGPERLPVAVRTVSGWIRTLRSLAATVQNELAQELKLQELQDSLKKVEQAGLQNLTPELKASMDELKEAAEALKRSYHVDAGSEAPHTIHNPLVTEPEAIHDGVTPAEPATQVSALAQAPNILEAGTASVVDSVVEAAPVTTVKSVVQGEVLVKSTPVQEVGLADVMDKPVTKQQIDTIDSHGTDLSSAGPSRIHQPGGDQ</sequence>
<evidence type="ECO:0000255" key="1">
    <source>
        <dbReference type="HAMAP-Rule" id="MF_00237"/>
    </source>
</evidence>
<evidence type="ECO:0000256" key="2">
    <source>
        <dbReference type="SAM" id="MobiDB-lite"/>
    </source>
</evidence>
<name>TATB_YERPA</name>
<gene>
    <name evidence="1" type="primary">tatB</name>
    <name type="ordered locus">YPA_0247</name>
</gene>
<reference key="1">
    <citation type="journal article" date="2006" name="J. Bacteriol.">
        <title>Complete genome sequence of Yersinia pestis strains Antiqua and Nepal516: evidence of gene reduction in an emerging pathogen.</title>
        <authorList>
            <person name="Chain P.S.G."/>
            <person name="Hu P."/>
            <person name="Malfatti S.A."/>
            <person name="Radnedge L."/>
            <person name="Larimer F."/>
            <person name="Vergez L.M."/>
            <person name="Worsham P."/>
            <person name="Chu M.C."/>
            <person name="Andersen G.L."/>
        </authorList>
    </citation>
    <scope>NUCLEOTIDE SEQUENCE [LARGE SCALE GENOMIC DNA]</scope>
    <source>
        <strain>Antiqua</strain>
    </source>
</reference>
<organism>
    <name type="scientific">Yersinia pestis bv. Antiqua (strain Antiqua)</name>
    <dbReference type="NCBI Taxonomy" id="360102"/>
    <lineage>
        <taxon>Bacteria</taxon>
        <taxon>Pseudomonadati</taxon>
        <taxon>Pseudomonadota</taxon>
        <taxon>Gammaproteobacteria</taxon>
        <taxon>Enterobacterales</taxon>
        <taxon>Yersiniaceae</taxon>
        <taxon>Yersinia</taxon>
    </lineage>
</organism>
<proteinExistence type="inferred from homology"/>
<comment type="function">
    <text evidence="1">Part of the twin-arginine translocation (Tat) system that transports large folded proteins containing a characteristic twin-arginine motif in their signal peptide across membranes. Together with TatC, TatB is part of a receptor directly interacting with Tat signal peptides. TatB may form an oligomeric binding site that transiently accommodates folded Tat precursor proteins before their translocation.</text>
</comment>
<comment type="subunit">
    <text evidence="1">The Tat system comprises two distinct complexes: a TatABC complex, containing multiple copies of TatA, TatB and TatC subunits, and a separate TatA complex, containing only TatA subunits. Substrates initially bind to the TatABC complex, which probably triggers association of the separate TatA complex to form the active translocon.</text>
</comment>
<comment type="subcellular location">
    <subcellularLocation>
        <location evidence="1">Cell inner membrane</location>
        <topology evidence="1">Single-pass membrane protein</topology>
    </subcellularLocation>
</comment>
<comment type="similarity">
    <text evidence="1">Belongs to the TatB family.</text>
</comment>
<protein>
    <recommendedName>
        <fullName evidence="1">Sec-independent protein translocase protein TatB</fullName>
    </recommendedName>
</protein>
<feature type="chain" id="PRO_0000301252" description="Sec-independent protein translocase protein TatB">
    <location>
        <begin position="1"/>
        <end position="220"/>
    </location>
</feature>
<feature type="transmembrane region" description="Helical" evidence="1">
    <location>
        <begin position="1"/>
        <end position="21"/>
    </location>
</feature>
<feature type="region of interest" description="Disordered" evidence="2">
    <location>
        <begin position="192"/>
        <end position="220"/>
    </location>
</feature>
<dbReference type="EMBL" id="CP000308">
    <property type="protein sequence ID" value="ABG12216.1"/>
    <property type="molecule type" value="Genomic_DNA"/>
</dbReference>
<dbReference type="RefSeq" id="WP_002211537.1">
    <property type="nucleotide sequence ID" value="NZ_CP009906.1"/>
</dbReference>
<dbReference type="SMR" id="Q1CBF6"/>
<dbReference type="GeneID" id="57974931"/>
<dbReference type="KEGG" id="ypa:YPA_0247"/>
<dbReference type="Proteomes" id="UP000001971">
    <property type="component" value="Chromosome"/>
</dbReference>
<dbReference type="GO" id="GO:0033281">
    <property type="term" value="C:TAT protein transport complex"/>
    <property type="evidence" value="ECO:0007669"/>
    <property type="project" value="UniProtKB-UniRule"/>
</dbReference>
<dbReference type="GO" id="GO:0008320">
    <property type="term" value="F:protein transmembrane transporter activity"/>
    <property type="evidence" value="ECO:0007669"/>
    <property type="project" value="UniProtKB-UniRule"/>
</dbReference>
<dbReference type="GO" id="GO:0043953">
    <property type="term" value="P:protein transport by the Tat complex"/>
    <property type="evidence" value="ECO:0007669"/>
    <property type="project" value="UniProtKB-UniRule"/>
</dbReference>
<dbReference type="Gene3D" id="1.20.5.3310">
    <property type="match status" value="1"/>
</dbReference>
<dbReference type="HAMAP" id="MF_00237">
    <property type="entry name" value="TatB"/>
    <property type="match status" value="1"/>
</dbReference>
<dbReference type="InterPro" id="IPR018448">
    <property type="entry name" value="TatB"/>
</dbReference>
<dbReference type="NCBIfam" id="TIGR01410">
    <property type="entry name" value="tatB"/>
    <property type="match status" value="1"/>
</dbReference>
<dbReference type="PANTHER" id="PTHR33162">
    <property type="entry name" value="SEC-INDEPENDENT PROTEIN TRANSLOCASE PROTEIN TATA, CHLOROPLASTIC"/>
    <property type="match status" value="1"/>
</dbReference>
<dbReference type="PANTHER" id="PTHR33162:SF1">
    <property type="entry name" value="SEC-INDEPENDENT PROTEIN TRANSLOCASE PROTEIN TATA, CHLOROPLASTIC"/>
    <property type="match status" value="1"/>
</dbReference>
<dbReference type="PRINTS" id="PR01506">
    <property type="entry name" value="TATBPROTEIN"/>
</dbReference>